<dbReference type="EC" id="3.4.21.-"/>
<dbReference type="Allergome" id="320">
    <property type="allergen name" value="Der p 6"/>
</dbReference>
<dbReference type="Allergome" id="3267">
    <property type="allergen name" value="Der p 6.0101"/>
</dbReference>
<dbReference type="MEROPS" id="S01.187"/>
<dbReference type="InParanoid" id="P49277"/>
<dbReference type="Proteomes" id="UP000515146">
    <property type="component" value="Unplaced"/>
</dbReference>
<dbReference type="GO" id="GO:0005576">
    <property type="term" value="C:extracellular region"/>
    <property type="evidence" value="ECO:0007669"/>
    <property type="project" value="UniProtKB-SubCell"/>
</dbReference>
<dbReference type="GO" id="GO:0008236">
    <property type="term" value="F:serine-type peptidase activity"/>
    <property type="evidence" value="ECO:0007669"/>
    <property type="project" value="UniProtKB-KW"/>
</dbReference>
<dbReference type="GO" id="GO:0006508">
    <property type="term" value="P:proteolysis"/>
    <property type="evidence" value="ECO:0007669"/>
    <property type="project" value="UniProtKB-KW"/>
</dbReference>
<feature type="chain" id="PRO_0000088714" description="Mite allergen Der p 6">
    <location>
        <begin position="1"/>
        <end position="20" status="greater than"/>
    </location>
</feature>
<feature type="domain" description="Peptidase S1" evidence="1">
    <location>
        <begin position="1"/>
        <end position="20" status="greater than"/>
    </location>
</feature>
<feature type="unsure residue">
    <location>
        <position position="1"/>
    </location>
</feature>
<feature type="unsure residue">
    <location>
        <position position="6"/>
    </location>
</feature>
<feature type="unsure residue">
    <location>
        <position position="10"/>
    </location>
</feature>
<feature type="unsure residue">
    <location>
        <position position="11"/>
    </location>
</feature>
<feature type="unsure residue">
    <location>
        <position position="17"/>
    </location>
</feature>
<feature type="non-terminal residue">
    <location>
        <position position="20"/>
    </location>
</feature>
<reference key="1">
    <citation type="journal article" date="1993" name="Clin. Exp. Allergy">
        <title>Allergens from Dermatophagoides mites with chymotryptic activity.</title>
        <authorList>
            <person name="Yasueda H."/>
            <person name="Mita H."/>
            <person name="Akiyama K."/>
            <person name="Shida T."/>
            <person name="Ando T."/>
            <person name="Sugiyama S."/>
            <person name="Yamakawa H."/>
        </authorList>
    </citation>
    <scope>PROTEIN SEQUENCE</scope>
</reference>
<protein>
    <recommendedName>
        <fullName>Mite allergen Der p 6</fullName>
        <ecNumber>3.4.21.-</ecNumber>
    </recommendedName>
    <alternativeName>
        <fullName>Allergen Der p VI</fullName>
    </alternativeName>
    <alternativeName>
        <fullName>DP5</fullName>
    </alternativeName>
    <allergenName>Der p 6</allergenName>
</protein>
<comment type="function">
    <text>Protease that shows specificity similar to chymotrypsin.</text>
</comment>
<comment type="subcellular location">
    <subcellularLocation>
        <location>Secreted</location>
    </subcellularLocation>
</comment>
<comment type="allergen">
    <text>Causes an allergic reaction in human. Common symptoms of mite allergy are bronchial asthma, allergic rhinitis and conjunctivitis.</text>
</comment>
<comment type="similarity">
    <text evidence="1">Belongs to the peptidase S1 family.</text>
</comment>
<name>DERP6_DERPT</name>
<organism>
    <name type="scientific">Dermatophagoides pteronyssinus</name>
    <name type="common">European house dust mite</name>
    <dbReference type="NCBI Taxonomy" id="6956"/>
    <lineage>
        <taxon>Eukaryota</taxon>
        <taxon>Metazoa</taxon>
        <taxon>Ecdysozoa</taxon>
        <taxon>Arthropoda</taxon>
        <taxon>Chelicerata</taxon>
        <taxon>Arachnida</taxon>
        <taxon>Acari</taxon>
        <taxon>Acariformes</taxon>
        <taxon>Sarcoptiformes</taxon>
        <taxon>Astigmata</taxon>
        <taxon>Psoroptidia</taxon>
        <taxon>Analgoidea</taxon>
        <taxon>Pyroglyphidae</taxon>
        <taxon>Dermatophagoidinae</taxon>
        <taxon>Dermatophagoides</taxon>
    </lineage>
</organism>
<keyword id="KW-0020">Allergen</keyword>
<keyword id="KW-0903">Direct protein sequencing</keyword>
<keyword id="KW-0378">Hydrolase</keyword>
<keyword id="KW-0645">Protease</keyword>
<keyword id="KW-1185">Reference proteome</keyword>
<keyword id="KW-0964">Secreted</keyword>
<keyword id="KW-0720">Serine protease</keyword>
<accession>P49277</accession>
<sequence length="20" mass="2084">AIGXQPAAEAEAPFQISLMK</sequence>
<proteinExistence type="evidence at protein level"/>
<evidence type="ECO:0000255" key="1">
    <source>
        <dbReference type="PROSITE-ProRule" id="PRU00274"/>
    </source>
</evidence>
<gene>
    <name type="primary">DERP6</name>
</gene>